<evidence type="ECO:0000255" key="1">
    <source>
        <dbReference type="HAMAP-Rule" id="MF_00581"/>
    </source>
</evidence>
<keyword id="KW-0028">Amino-acid biosynthesis</keyword>
<keyword id="KW-0055">Arginine biosynthesis</keyword>
<keyword id="KW-0067">ATP-binding</keyword>
<keyword id="KW-0963">Cytoplasm</keyword>
<keyword id="KW-0436">Ligase</keyword>
<keyword id="KW-0547">Nucleotide-binding</keyword>
<accession>Q65SH4</accession>
<name>ASSY_MANSM</name>
<sequence length="444" mass="49466">MSNTILQNLPLGQKVGIAFSGGLDTSAALLWMRQKGAVPYAYTANLGQPDEDDYNAIPKKAMAYGAENARLIDCRKQLAQEGIAAIQCGAFHISTGGVTYFNTTPLGRAVTGTMLVAAMKEDDVNIWGDGSTFKGNDIERFYRYGLLTNPNLKIYKPWLDDQFIDELGGRFEMSQFLIANGFDYKMSVEKAYSTDSNMLGATHEAKDLEDLSTGIKIVKPIMGVAFWDESVEIKPEVVTVRFEEGVPVELNGKRFDDVVELFMEANRIGGRHGLGMSDQIENRIIEAKSRGIYEAPGMALFHIAYERLVTGIHNEDTIEQYRINGLRLGRLLYQGRWFDPQALMLRESSQRWVAKAITGEVKLELRRGNDYSILDTVSPNLTYEAERLSMEKVEDAPFDPIDRIGQLTMRNLDVTDTRNKLGIYSEAGLLTAGKDAVVPQLGSK</sequence>
<comment type="catalytic activity">
    <reaction evidence="1">
        <text>L-citrulline + L-aspartate + ATP = 2-(N(omega)-L-arginino)succinate + AMP + diphosphate + H(+)</text>
        <dbReference type="Rhea" id="RHEA:10932"/>
        <dbReference type="ChEBI" id="CHEBI:15378"/>
        <dbReference type="ChEBI" id="CHEBI:29991"/>
        <dbReference type="ChEBI" id="CHEBI:30616"/>
        <dbReference type="ChEBI" id="CHEBI:33019"/>
        <dbReference type="ChEBI" id="CHEBI:57472"/>
        <dbReference type="ChEBI" id="CHEBI:57743"/>
        <dbReference type="ChEBI" id="CHEBI:456215"/>
        <dbReference type="EC" id="6.3.4.5"/>
    </reaction>
</comment>
<comment type="pathway">
    <text evidence="1">Amino-acid biosynthesis; L-arginine biosynthesis; L-arginine from L-ornithine and carbamoyl phosphate: step 2/3.</text>
</comment>
<comment type="subunit">
    <text evidence="1">Homotetramer.</text>
</comment>
<comment type="subcellular location">
    <subcellularLocation>
        <location evidence="1">Cytoplasm</location>
    </subcellularLocation>
</comment>
<comment type="similarity">
    <text evidence="1">Belongs to the argininosuccinate synthase family. Type 2 subfamily.</text>
</comment>
<protein>
    <recommendedName>
        <fullName evidence="1">Argininosuccinate synthase</fullName>
        <ecNumber evidence="1">6.3.4.5</ecNumber>
    </recommendedName>
    <alternativeName>
        <fullName evidence="1">Citrulline--aspartate ligase</fullName>
    </alternativeName>
</protein>
<organism>
    <name type="scientific">Mannheimia succiniciproducens (strain KCTC 0769BP / MBEL55E)</name>
    <dbReference type="NCBI Taxonomy" id="221988"/>
    <lineage>
        <taxon>Bacteria</taxon>
        <taxon>Pseudomonadati</taxon>
        <taxon>Pseudomonadota</taxon>
        <taxon>Gammaproteobacteria</taxon>
        <taxon>Pasteurellales</taxon>
        <taxon>Pasteurellaceae</taxon>
        <taxon>Basfia</taxon>
    </lineage>
</organism>
<dbReference type="EC" id="6.3.4.5" evidence="1"/>
<dbReference type="EMBL" id="AE016827">
    <property type="protein sequence ID" value="AAU38086.1"/>
    <property type="molecule type" value="Genomic_DNA"/>
</dbReference>
<dbReference type="RefSeq" id="WP_011200652.1">
    <property type="nucleotide sequence ID" value="NC_006300.1"/>
</dbReference>
<dbReference type="SMR" id="Q65SH4"/>
<dbReference type="STRING" id="221988.MS1479"/>
<dbReference type="KEGG" id="msu:MS1479"/>
<dbReference type="eggNOG" id="COG0137">
    <property type="taxonomic scope" value="Bacteria"/>
</dbReference>
<dbReference type="HOGENOM" id="CLU_032784_4_1_6"/>
<dbReference type="OrthoDB" id="9801641at2"/>
<dbReference type="UniPathway" id="UPA00068">
    <property type="reaction ID" value="UER00113"/>
</dbReference>
<dbReference type="Proteomes" id="UP000000607">
    <property type="component" value="Chromosome"/>
</dbReference>
<dbReference type="GO" id="GO:0005737">
    <property type="term" value="C:cytoplasm"/>
    <property type="evidence" value="ECO:0007669"/>
    <property type="project" value="UniProtKB-SubCell"/>
</dbReference>
<dbReference type="GO" id="GO:0004055">
    <property type="term" value="F:argininosuccinate synthase activity"/>
    <property type="evidence" value="ECO:0007669"/>
    <property type="project" value="UniProtKB-UniRule"/>
</dbReference>
<dbReference type="GO" id="GO:0005524">
    <property type="term" value="F:ATP binding"/>
    <property type="evidence" value="ECO:0007669"/>
    <property type="project" value="UniProtKB-UniRule"/>
</dbReference>
<dbReference type="GO" id="GO:0042803">
    <property type="term" value="F:protein homodimerization activity"/>
    <property type="evidence" value="ECO:0007669"/>
    <property type="project" value="InterPro"/>
</dbReference>
<dbReference type="GO" id="GO:0000053">
    <property type="term" value="P:argininosuccinate metabolic process"/>
    <property type="evidence" value="ECO:0007669"/>
    <property type="project" value="TreeGrafter"/>
</dbReference>
<dbReference type="GO" id="GO:0006526">
    <property type="term" value="P:L-arginine biosynthetic process"/>
    <property type="evidence" value="ECO:0007669"/>
    <property type="project" value="UniProtKB-UniRule"/>
</dbReference>
<dbReference type="GO" id="GO:0000050">
    <property type="term" value="P:urea cycle"/>
    <property type="evidence" value="ECO:0007669"/>
    <property type="project" value="TreeGrafter"/>
</dbReference>
<dbReference type="CDD" id="cd01999">
    <property type="entry name" value="ASS"/>
    <property type="match status" value="1"/>
</dbReference>
<dbReference type="FunFam" id="1.10.287.400:FF:000001">
    <property type="entry name" value="Argininosuccinate synthase"/>
    <property type="match status" value="1"/>
</dbReference>
<dbReference type="Gene3D" id="1.10.287.400">
    <property type="match status" value="1"/>
</dbReference>
<dbReference type="Gene3D" id="3.90.1260.10">
    <property type="entry name" value="Argininosuccinate synthetase, chain A, domain 2"/>
    <property type="match status" value="1"/>
</dbReference>
<dbReference type="Gene3D" id="3.40.50.620">
    <property type="entry name" value="HUPs"/>
    <property type="match status" value="1"/>
</dbReference>
<dbReference type="HAMAP" id="MF_00581">
    <property type="entry name" value="Arg_succ_synth_type2"/>
    <property type="match status" value="1"/>
</dbReference>
<dbReference type="InterPro" id="IPR023437">
    <property type="entry name" value="Arg_succ_synth_type2_subfam"/>
</dbReference>
<dbReference type="InterPro" id="IPR048268">
    <property type="entry name" value="Arginosuc_syn_C"/>
</dbReference>
<dbReference type="InterPro" id="IPR048267">
    <property type="entry name" value="Arginosuc_syn_N"/>
</dbReference>
<dbReference type="InterPro" id="IPR001518">
    <property type="entry name" value="Arginosuc_synth"/>
</dbReference>
<dbReference type="InterPro" id="IPR018223">
    <property type="entry name" value="Arginosuc_synth_CS"/>
</dbReference>
<dbReference type="InterPro" id="IPR023434">
    <property type="entry name" value="Arginosuc_synth_type_1_subfam"/>
</dbReference>
<dbReference type="InterPro" id="IPR024074">
    <property type="entry name" value="AS_cat/multimer_dom_body"/>
</dbReference>
<dbReference type="InterPro" id="IPR024073">
    <property type="entry name" value="AS_multimer_C_tail"/>
</dbReference>
<dbReference type="InterPro" id="IPR014729">
    <property type="entry name" value="Rossmann-like_a/b/a_fold"/>
</dbReference>
<dbReference type="NCBIfam" id="TIGR00032">
    <property type="entry name" value="argG"/>
    <property type="match status" value="1"/>
</dbReference>
<dbReference type="NCBIfam" id="NF003779">
    <property type="entry name" value="PRK05370.1"/>
    <property type="match status" value="1"/>
</dbReference>
<dbReference type="PANTHER" id="PTHR11587">
    <property type="entry name" value="ARGININOSUCCINATE SYNTHASE"/>
    <property type="match status" value="1"/>
</dbReference>
<dbReference type="PANTHER" id="PTHR11587:SF2">
    <property type="entry name" value="ARGININOSUCCINATE SYNTHASE"/>
    <property type="match status" value="1"/>
</dbReference>
<dbReference type="Pfam" id="PF20979">
    <property type="entry name" value="Arginosuc_syn_C"/>
    <property type="match status" value="1"/>
</dbReference>
<dbReference type="Pfam" id="PF00764">
    <property type="entry name" value="Arginosuc_synth"/>
    <property type="match status" value="1"/>
</dbReference>
<dbReference type="SUPFAM" id="SSF52402">
    <property type="entry name" value="Adenine nucleotide alpha hydrolases-like"/>
    <property type="match status" value="1"/>
</dbReference>
<dbReference type="SUPFAM" id="SSF69864">
    <property type="entry name" value="Argininosuccinate synthetase, C-terminal domain"/>
    <property type="match status" value="1"/>
</dbReference>
<dbReference type="PROSITE" id="PS00564">
    <property type="entry name" value="ARGININOSUCCIN_SYN_1"/>
    <property type="match status" value="1"/>
</dbReference>
<dbReference type="PROSITE" id="PS00565">
    <property type="entry name" value="ARGININOSUCCIN_SYN_2"/>
    <property type="match status" value="1"/>
</dbReference>
<feature type="chain" id="PRO_1000025431" description="Argininosuccinate synthase">
    <location>
        <begin position="1"/>
        <end position="444"/>
    </location>
</feature>
<feature type="binding site" evidence="1">
    <location>
        <begin position="18"/>
        <end position="26"/>
    </location>
    <ligand>
        <name>ATP</name>
        <dbReference type="ChEBI" id="CHEBI:30616"/>
    </ligand>
</feature>
<feature type="binding site" evidence="1">
    <location>
        <position position="44"/>
    </location>
    <ligand>
        <name>ATP</name>
        <dbReference type="ChEBI" id="CHEBI:30616"/>
    </ligand>
</feature>
<feature type="binding site" evidence="1">
    <location>
        <position position="100"/>
    </location>
    <ligand>
        <name>L-citrulline</name>
        <dbReference type="ChEBI" id="CHEBI:57743"/>
    </ligand>
</feature>
<feature type="binding site" evidence="1">
    <location>
        <position position="130"/>
    </location>
    <ligand>
        <name>ATP</name>
        <dbReference type="ChEBI" id="CHEBI:30616"/>
    </ligand>
</feature>
<feature type="binding site" evidence="1">
    <location>
        <position position="132"/>
    </location>
    <ligand>
        <name>ATP</name>
        <dbReference type="ChEBI" id="CHEBI:30616"/>
    </ligand>
</feature>
<feature type="binding site" evidence="1">
    <location>
        <position position="132"/>
    </location>
    <ligand>
        <name>L-aspartate</name>
        <dbReference type="ChEBI" id="CHEBI:29991"/>
    </ligand>
</feature>
<feature type="binding site" evidence="1">
    <location>
        <position position="136"/>
    </location>
    <ligand>
        <name>L-aspartate</name>
        <dbReference type="ChEBI" id="CHEBI:29991"/>
    </ligand>
</feature>
<feature type="binding site" evidence="1">
    <location>
        <position position="136"/>
    </location>
    <ligand>
        <name>L-citrulline</name>
        <dbReference type="ChEBI" id="CHEBI:57743"/>
    </ligand>
</feature>
<feature type="binding site" evidence="1">
    <location>
        <position position="137"/>
    </location>
    <ligand>
        <name>ATP</name>
        <dbReference type="ChEBI" id="CHEBI:30616"/>
    </ligand>
</feature>
<feature type="binding site" evidence="1">
    <location>
        <position position="137"/>
    </location>
    <ligand>
        <name>L-aspartate</name>
        <dbReference type="ChEBI" id="CHEBI:29991"/>
    </ligand>
</feature>
<feature type="binding site" evidence="1">
    <location>
        <position position="140"/>
    </location>
    <ligand>
        <name>L-citrulline</name>
        <dbReference type="ChEBI" id="CHEBI:57743"/>
    </ligand>
</feature>
<feature type="binding site" evidence="1">
    <location>
        <position position="193"/>
    </location>
    <ligand>
        <name>L-citrulline</name>
        <dbReference type="ChEBI" id="CHEBI:57743"/>
    </ligand>
</feature>
<feature type="binding site" evidence="1">
    <location>
        <position position="195"/>
    </location>
    <ligand>
        <name>ATP</name>
        <dbReference type="ChEBI" id="CHEBI:30616"/>
    </ligand>
</feature>
<feature type="binding site" evidence="1">
    <location>
        <position position="202"/>
    </location>
    <ligand>
        <name>L-citrulline</name>
        <dbReference type="ChEBI" id="CHEBI:57743"/>
    </ligand>
</feature>
<feature type="binding site" evidence="1">
    <location>
        <position position="204"/>
    </location>
    <ligand>
        <name>L-citrulline</name>
        <dbReference type="ChEBI" id="CHEBI:57743"/>
    </ligand>
</feature>
<feature type="binding site" evidence="1">
    <location>
        <position position="281"/>
    </location>
    <ligand>
        <name>L-citrulline</name>
        <dbReference type="ChEBI" id="CHEBI:57743"/>
    </ligand>
</feature>
<gene>
    <name evidence="1" type="primary">argG</name>
    <name type="ordered locus">MS1479</name>
</gene>
<reference key="1">
    <citation type="journal article" date="2004" name="Nat. Biotechnol.">
        <title>The genome sequence of the capnophilic rumen bacterium Mannheimia succiniciproducens.</title>
        <authorList>
            <person name="Hong S.H."/>
            <person name="Kim J.S."/>
            <person name="Lee S.Y."/>
            <person name="In Y.H."/>
            <person name="Choi S.S."/>
            <person name="Rih J.-K."/>
            <person name="Kim C.H."/>
            <person name="Jeong H."/>
            <person name="Hur C.G."/>
            <person name="Kim J.J."/>
        </authorList>
    </citation>
    <scope>NUCLEOTIDE SEQUENCE [LARGE SCALE GENOMIC DNA]</scope>
    <source>
        <strain>KCTC 0769BP / MBEL55E</strain>
    </source>
</reference>
<proteinExistence type="inferred from homology"/>